<comment type="function">
    <text evidence="1">This is one of the proteins that bind and probably mediate the attachment of the 5S RNA into the large ribosomal subunit, where it forms part of the central protuberance.</text>
</comment>
<comment type="subunit">
    <text evidence="1">Part of the 50S ribosomal subunit; part of the 5S rRNA/L5/L18/L25 subcomplex. Contacts the 5S and 23S rRNAs.</text>
</comment>
<comment type="similarity">
    <text evidence="1">Belongs to the universal ribosomal protein uL18 family.</text>
</comment>
<organism>
    <name type="scientific">Enterobacter sp. (strain 638)</name>
    <dbReference type="NCBI Taxonomy" id="399742"/>
    <lineage>
        <taxon>Bacteria</taxon>
        <taxon>Pseudomonadati</taxon>
        <taxon>Pseudomonadota</taxon>
        <taxon>Gammaproteobacteria</taxon>
        <taxon>Enterobacterales</taxon>
        <taxon>Enterobacteriaceae</taxon>
        <taxon>Enterobacter</taxon>
    </lineage>
</organism>
<dbReference type="EMBL" id="CP000653">
    <property type="protein sequence ID" value="ABP62392.1"/>
    <property type="molecule type" value="Genomic_DNA"/>
</dbReference>
<dbReference type="RefSeq" id="WP_015960708.1">
    <property type="nucleotide sequence ID" value="NC_009436.1"/>
</dbReference>
<dbReference type="SMR" id="A4WFB2"/>
<dbReference type="STRING" id="399742.Ent638_3735"/>
<dbReference type="GeneID" id="97603653"/>
<dbReference type="KEGG" id="ent:Ent638_3735"/>
<dbReference type="eggNOG" id="COG0256">
    <property type="taxonomic scope" value="Bacteria"/>
</dbReference>
<dbReference type="HOGENOM" id="CLU_098841_0_1_6"/>
<dbReference type="OrthoDB" id="9810939at2"/>
<dbReference type="Proteomes" id="UP000000230">
    <property type="component" value="Chromosome"/>
</dbReference>
<dbReference type="GO" id="GO:0022625">
    <property type="term" value="C:cytosolic large ribosomal subunit"/>
    <property type="evidence" value="ECO:0007669"/>
    <property type="project" value="TreeGrafter"/>
</dbReference>
<dbReference type="GO" id="GO:0008097">
    <property type="term" value="F:5S rRNA binding"/>
    <property type="evidence" value="ECO:0007669"/>
    <property type="project" value="TreeGrafter"/>
</dbReference>
<dbReference type="GO" id="GO:0003735">
    <property type="term" value="F:structural constituent of ribosome"/>
    <property type="evidence" value="ECO:0007669"/>
    <property type="project" value="InterPro"/>
</dbReference>
<dbReference type="GO" id="GO:0006412">
    <property type="term" value="P:translation"/>
    <property type="evidence" value="ECO:0007669"/>
    <property type="project" value="UniProtKB-UniRule"/>
</dbReference>
<dbReference type="CDD" id="cd00432">
    <property type="entry name" value="Ribosomal_L18_L5e"/>
    <property type="match status" value="1"/>
</dbReference>
<dbReference type="FunFam" id="3.30.420.100:FF:000001">
    <property type="entry name" value="50S ribosomal protein L18"/>
    <property type="match status" value="1"/>
</dbReference>
<dbReference type="Gene3D" id="3.30.420.100">
    <property type="match status" value="1"/>
</dbReference>
<dbReference type="HAMAP" id="MF_01337_B">
    <property type="entry name" value="Ribosomal_uL18_B"/>
    <property type="match status" value="1"/>
</dbReference>
<dbReference type="InterPro" id="IPR004389">
    <property type="entry name" value="Ribosomal_uL18_bac-type"/>
</dbReference>
<dbReference type="InterPro" id="IPR005484">
    <property type="entry name" value="Ribosomal_uL18_bac/euk"/>
</dbReference>
<dbReference type="NCBIfam" id="TIGR00060">
    <property type="entry name" value="L18_bact"/>
    <property type="match status" value="1"/>
</dbReference>
<dbReference type="PANTHER" id="PTHR12899">
    <property type="entry name" value="39S RIBOSOMAL PROTEIN L18, MITOCHONDRIAL"/>
    <property type="match status" value="1"/>
</dbReference>
<dbReference type="PANTHER" id="PTHR12899:SF3">
    <property type="entry name" value="LARGE RIBOSOMAL SUBUNIT PROTEIN UL18M"/>
    <property type="match status" value="1"/>
</dbReference>
<dbReference type="Pfam" id="PF00861">
    <property type="entry name" value="Ribosomal_L18p"/>
    <property type="match status" value="1"/>
</dbReference>
<dbReference type="SUPFAM" id="SSF53137">
    <property type="entry name" value="Translational machinery components"/>
    <property type="match status" value="1"/>
</dbReference>
<name>RL18_ENT38</name>
<reference key="1">
    <citation type="journal article" date="2010" name="PLoS Genet.">
        <title>Genome sequence of the plant growth promoting endophytic bacterium Enterobacter sp. 638.</title>
        <authorList>
            <person name="Taghavi S."/>
            <person name="van der Lelie D."/>
            <person name="Hoffman A."/>
            <person name="Zhang Y.B."/>
            <person name="Walla M.D."/>
            <person name="Vangronsveld J."/>
            <person name="Newman L."/>
            <person name="Monchy S."/>
        </authorList>
    </citation>
    <scope>NUCLEOTIDE SEQUENCE [LARGE SCALE GENOMIC DNA]</scope>
    <source>
        <strain>638</strain>
    </source>
</reference>
<evidence type="ECO:0000255" key="1">
    <source>
        <dbReference type="HAMAP-Rule" id="MF_01337"/>
    </source>
</evidence>
<evidence type="ECO:0000305" key="2"/>
<protein>
    <recommendedName>
        <fullName evidence="1">Large ribosomal subunit protein uL18</fullName>
    </recommendedName>
    <alternativeName>
        <fullName evidence="2">50S ribosomal protein L18</fullName>
    </alternativeName>
</protein>
<gene>
    <name evidence="1" type="primary">rplR</name>
    <name type="ordered locus">Ent638_3735</name>
</gene>
<sequence>MDKKSARIRRATRARRKLKELGATRLVVHRTPRHIYAQVIAPNGSEVLVAASTVEKAITEQLKYTGNKDAAAAVGKAVAERALEKGIKVVSFDRSGFQYHGRVQALADAAREAGLQF</sequence>
<accession>A4WFB2</accession>
<keyword id="KW-0687">Ribonucleoprotein</keyword>
<keyword id="KW-0689">Ribosomal protein</keyword>
<keyword id="KW-0694">RNA-binding</keyword>
<keyword id="KW-0699">rRNA-binding</keyword>
<feature type="chain" id="PRO_1000067640" description="Large ribosomal subunit protein uL18">
    <location>
        <begin position="1"/>
        <end position="117"/>
    </location>
</feature>
<proteinExistence type="inferred from homology"/>